<sequence>MSETHFGFEKVDESEKAGKVAGVFHSVASKYDVMNDLMSGGMHRLWKVFTIAQANVRPGQKVLDIAGGTGDLAKAFAKQAGPTGEVWLTDINESMLRVGRDRLLNKGVVTPVALCDAERIPFPDNYFDLVTVAFGLRNMTHKDAALAEMRRVIKPGGKVMVLEFSKVWKPLEKFYDVYSFKVLPWLGERVAGDAPSYRYLAESIRMHPDQGSLVRMMEQVGLEQVEYFNLTAGVVALHVGRKY</sequence>
<protein>
    <recommendedName>
        <fullName evidence="1">Ubiquinone/menaquinone biosynthesis C-methyltransferase UbiE</fullName>
        <ecNumber evidence="1">2.1.1.163</ecNumber>
        <ecNumber evidence="1">2.1.1.201</ecNumber>
    </recommendedName>
    <alternativeName>
        <fullName evidence="1">2-methoxy-6-polyprenyl-1,4-benzoquinol methylase</fullName>
    </alternativeName>
    <alternativeName>
        <fullName evidence="1">Demethylmenaquinone methyltransferase</fullName>
    </alternativeName>
</protein>
<gene>
    <name evidence="1" type="primary">ubiE</name>
    <name type="ordered locus">Rmet_0371</name>
</gene>
<organism>
    <name type="scientific">Cupriavidus metallidurans (strain ATCC 43123 / DSM 2839 / NBRC 102507 / CH34)</name>
    <name type="common">Ralstonia metallidurans</name>
    <dbReference type="NCBI Taxonomy" id="266264"/>
    <lineage>
        <taxon>Bacteria</taxon>
        <taxon>Pseudomonadati</taxon>
        <taxon>Pseudomonadota</taxon>
        <taxon>Betaproteobacteria</taxon>
        <taxon>Burkholderiales</taxon>
        <taxon>Burkholderiaceae</taxon>
        <taxon>Cupriavidus</taxon>
    </lineage>
</organism>
<evidence type="ECO:0000255" key="1">
    <source>
        <dbReference type="HAMAP-Rule" id="MF_01813"/>
    </source>
</evidence>
<feature type="chain" id="PRO_1000056282" description="Ubiquinone/menaquinone biosynthesis C-methyltransferase UbiE">
    <location>
        <begin position="1"/>
        <end position="243"/>
    </location>
</feature>
<feature type="binding site" evidence="1">
    <location>
        <position position="69"/>
    </location>
    <ligand>
        <name>S-adenosyl-L-methionine</name>
        <dbReference type="ChEBI" id="CHEBI:59789"/>
    </ligand>
</feature>
<feature type="binding site" evidence="1">
    <location>
        <position position="90"/>
    </location>
    <ligand>
        <name>S-adenosyl-L-methionine</name>
        <dbReference type="ChEBI" id="CHEBI:59789"/>
    </ligand>
</feature>
<feature type="binding site" evidence="1">
    <location>
        <begin position="116"/>
        <end position="117"/>
    </location>
    <ligand>
        <name>S-adenosyl-L-methionine</name>
        <dbReference type="ChEBI" id="CHEBI:59789"/>
    </ligand>
</feature>
<name>UBIE_CUPMC</name>
<reference key="1">
    <citation type="journal article" date="2010" name="PLoS ONE">
        <title>The complete genome sequence of Cupriavidus metallidurans strain CH34, a master survivalist in harsh and anthropogenic environments.</title>
        <authorList>
            <person name="Janssen P.J."/>
            <person name="Van Houdt R."/>
            <person name="Moors H."/>
            <person name="Monsieurs P."/>
            <person name="Morin N."/>
            <person name="Michaux A."/>
            <person name="Benotmane M.A."/>
            <person name="Leys N."/>
            <person name="Vallaeys T."/>
            <person name="Lapidus A."/>
            <person name="Monchy S."/>
            <person name="Medigue C."/>
            <person name="Taghavi S."/>
            <person name="McCorkle S."/>
            <person name="Dunn J."/>
            <person name="van der Lelie D."/>
            <person name="Mergeay M."/>
        </authorList>
    </citation>
    <scope>NUCLEOTIDE SEQUENCE [LARGE SCALE GENOMIC DNA]</scope>
    <source>
        <strain>ATCC 43123 / DSM 2839 / NBRC 102507 / CH34</strain>
    </source>
</reference>
<keyword id="KW-0474">Menaquinone biosynthesis</keyword>
<keyword id="KW-0489">Methyltransferase</keyword>
<keyword id="KW-1185">Reference proteome</keyword>
<keyword id="KW-0949">S-adenosyl-L-methionine</keyword>
<keyword id="KW-0808">Transferase</keyword>
<keyword id="KW-0831">Ubiquinone biosynthesis</keyword>
<dbReference type="EC" id="2.1.1.163" evidence="1"/>
<dbReference type="EC" id="2.1.1.201" evidence="1"/>
<dbReference type="EMBL" id="CP000352">
    <property type="protein sequence ID" value="ABF07257.1"/>
    <property type="molecule type" value="Genomic_DNA"/>
</dbReference>
<dbReference type="RefSeq" id="WP_011515248.1">
    <property type="nucleotide sequence ID" value="NC_007973.1"/>
</dbReference>
<dbReference type="SMR" id="Q1LRG9"/>
<dbReference type="STRING" id="266264.Rmet_0371"/>
<dbReference type="KEGG" id="rme:Rmet_0371"/>
<dbReference type="eggNOG" id="COG2226">
    <property type="taxonomic scope" value="Bacteria"/>
</dbReference>
<dbReference type="HOGENOM" id="CLU_037990_0_0_4"/>
<dbReference type="UniPathway" id="UPA00079">
    <property type="reaction ID" value="UER00169"/>
</dbReference>
<dbReference type="UniPathway" id="UPA00232"/>
<dbReference type="Proteomes" id="UP000002429">
    <property type="component" value="Chromosome"/>
</dbReference>
<dbReference type="GO" id="GO:0008425">
    <property type="term" value="F:2-methoxy-6-polyprenyl-1,4-benzoquinol methyltransferase activity"/>
    <property type="evidence" value="ECO:0007669"/>
    <property type="project" value="UniProtKB-UniRule"/>
</dbReference>
<dbReference type="GO" id="GO:0043770">
    <property type="term" value="F:demethylmenaquinone methyltransferase activity"/>
    <property type="evidence" value="ECO:0007669"/>
    <property type="project" value="UniProtKB-UniRule"/>
</dbReference>
<dbReference type="GO" id="GO:0009060">
    <property type="term" value="P:aerobic respiration"/>
    <property type="evidence" value="ECO:0007669"/>
    <property type="project" value="UniProtKB-UniRule"/>
</dbReference>
<dbReference type="GO" id="GO:0009234">
    <property type="term" value="P:menaquinone biosynthetic process"/>
    <property type="evidence" value="ECO:0007669"/>
    <property type="project" value="UniProtKB-UniRule"/>
</dbReference>
<dbReference type="GO" id="GO:0032259">
    <property type="term" value="P:methylation"/>
    <property type="evidence" value="ECO:0007669"/>
    <property type="project" value="UniProtKB-KW"/>
</dbReference>
<dbReference type="CDD" id="cd02440">
    <property type="entry name" value="AdoMet_MTases"/>
    <property type="match status" value="1"/>
</dbReference>
<dbReference type="Gene3D" id="3.40.50.150">
    <property type="entry name" value="Vaccinia Virus protein VP39"/>
    <property type="match status" value="1"/>
</dbReference>
<dbReference type="HAMAP" id="MF_01813">
    <property type="entry name" value="MenG_UbiE_methyltr"/>
    <property type="match status" value="1"/>
</dbReference>
<dbReference type="InterPro" id="IPR029063">
    <property type="entry name" value="SAM-dependent_MTases_sf"/>
</dbReference>
<dbReference type="InterPro" id="IPR004033">
    <property type="entry name" value="UbiE/COQ5_MeTrFase"/>
</dbReference>
<dbReference type="InterPro" id="IPR023576">
    <property type="entry name" value="UbiE/COQ5_MeTrFase_CS"/>
</dbReference>
<dbReference type="NCBIfam" id="TIGR01934">
    <property type="entry name" value="MenG_MenH_UbiE"/>
    <property type="match status" value="1"/>
</dbReference>
<dbReference type="NCBIfam" id="NF001240">
    <property type="entry name" value="PRK00216.1-1"/>
    <property type="match status" value="1"/>
</dbReference>
<dbReference type="PANTHER" id="PTHR43591:SF24">
    <property type="entry name" value="2-METHOXY-6-POLYPRENYL-1,4-BENZOQUINOL METHYLASE, MITOCHONDRIAL"/>
    <property type="match status" value="1"/>
</dbReference>
<dbReference type="PANTHER" id="PTHR43591">
    <property type="entry name" value="METHYLTRANSFERASE"/>
    <property type="match status" value="1"/>
</dbReference>
<dbReference type="Pfam" id="PF01209">
    <property type="entry name" value="Ubie_methyltran"/>
    <property type="match status" value="1"/>
</dbReference>
<dbReference type="SUPFAM" id="SSF53335">
    <property type="entry name" value="S-adenosyl-L-methionine-dependent methyltransferases"/>
    <property type="match status" value="1"/>
</dbReference>
<dbReference type="PROSITE" id="PS51608">
    <property type="entry name" value="SAM_MT_UBIE"/>
    <property type="match status" value="1"/>
</dbReference>
<dbReference type="PROSITE" id="PS01183">
    <property type="entry name" value="UBIE_1"/>
    <property type="match status" value="1"/>
</dbReference>
<dbReference type="PROSITE" id="PS01184">
    <property type="entry name" value="UBIE_2"/>
    <property type="match status" value="1"/>
</dbReference>
<proteinExistence type="inferred from homology"/>
<comment type="function">
    <text evidence="1">Methyltransferase required for the conversion of demethylmenaquinol (DMKH2) to menaquinol (MKH2) and the conversion of 2-polyprenyl-6-methoxy-1,4-benzoquinol (DDMQH2) to 2-polyprenyl-3-methyl-6-methoxy-1,4-benzoquinol (DMQH2).</text>
</comment>
<comment type="catalytic activity">
    <reaction evidence="1">
        <text>a 2-demethylmenaquinol + S-adenosyl-L-methionine = a menaquinol + S-adenosyl-L-homocysteine + H(+)</text>
        <dbReference type="Rhea" id="RHEA:42640"/>
        <dbReference type="Rhea" id="RHEA-COMP:9539"/>
        <dbReference type="Rhea" id="RHEA-COMP:9563"/>
        <dbReference type="ChEBI" id="CHEBI:15378"/>
        <dbReference type="ChEBI" id="CHEBI:18151"/>
        <dbReference type="ChEBI" id="CHEBI:55437"/>
        <dbReference type="ChEBI" id="CHEBI:57856"/>
        <dbReference type="ChEBI" id="CHEBI:59789"/>
        <dbReference type="EC" id="2.1.1.163"/>
    </reaction>
</comment>
<comment type="catalytic activity">
    <reaction evidence="1">
        <text>a 2-methoxy-6-(all-trans-polyprenyl)benzene-1,4-diol + S-adenosyl-L-methionine = a 5-methoxy-2-methyl-3-(all-trans-polyprenyl)benzene-1,4-diol + S-adenosyl-L-homocysteine + H(+)</text>
        <dbReference type="Rhea" id="RHEA:28286"/>
        <dbReference type="Rhea" id="RHEA-COMP:10858"/>
        <dbReference type="Rhea" id="RHEA-COMP:10859"/>
        <dbReference type="ChEBI" id="CHEBI:15378"/>
        <dbReference type="ChEBI" id="CHEBI:57856"/>
        <dbReference type="ChEBI" id="CHEBI:59789"/>
        <dbReference type="ChEBI" id="CHEBI:84166"/>
        <dbReference type="ChEBI" id="CHEBI:84167"/>
        <dbReference type="EC" id="2.1.1.201"/>
    </reaction>
</comment>
<comment type="pathway">
    <text evidence="1">Quinol/quinone metabolism; menaquinone biosynthesis; menaquinol from 1,4-dihydroxy-2-naphthoate: step 2/2.</text>
</comment>
<comment type="pathway">
    <text evidence="1">Cofactor biosynthesis; ubiquinone biosynthesis.</text>
</comment>
<comment type="similarity">
    <text evidence="1">Belongs to the class I-like SAM-binding methyltransferase superfamily. MenG/UbiE family.</text>
</comment>
<accession>Q1LRG9</accession>